<gene>
    <name type="primary">Ctnnd1</name>
    <name type="synonym">Catns</name>
    <name type="synonym">Kiaa0384</name>
</gene>
<name>CTND1_MOUSE</name>
<keyword id="KW-0007">Acetylation</keyword>
<keyword id="KW-0025">Alternative splicing</keyword>
<keyword id="KW-0130">Cell adhesion</keyword>
<keyword id="KW-0965">Cell junction</keyword>
<keyword id="KW-1003">Cell membrane</keyword>
<keyword id="KW-0175">Coiled coil</keyword>
<keyword id="KW-0963">Cytoplasm</keyword>
<keyword id="KW-1017">Isopeptide bond</keyword>
<keyword id="KW-0472">Membrane</keyword>
<keyword id="KW-0539">Nucleus</keyword>
<keyword id="KW-0597">Phosphoprotein</keyword>
<keyword id="KW-1185">Reference proteome</keyword>
<keyword id="KW-0677">Repeat</keyword>
<keyword id="KW-0804">Transcription</keyword>
<keyword id="KW-0805">Transcription regulation</keyword>
<keyword id="KW-0832">Ubl conjugation</keyword>
<keyword id="KW-0879">Wnt signaling pathway</keyword>
<accession>P30999</accession>
<accession>Q3TSU9</accession>
<accession>Q80XQ4</accession>
<accession>Q8CHF8</accession>
<proteinExistence type="evidence at protein level"/>
<comment type="function">
    <text evidence="1 7 9 10 11 15">Key regulator of cell-cell adhesion that associates with and regulates the cell adhesion properties of both C-, E- and N-cadherins, being critical for their surface stability (PubMed:33972531). Promotes localization and retention of DSG3 at cell-cell junctions, via its interaction with DSG3 (PubMed:18343367). Beside cell-cell adhesion, regulates gene transcription through several transcription factors including ZBTB33/Kaiso2 and GLIS2, and the activity of Rho family GTPases and downstream cytoskeletal dynamics. Implicated both in cell transformation by SRC and in ligand-induced receptor signaling through the EGF, PDGF, CSF-1 and ERBB2 receptors.</text>
</comment>
<comment type="subunit">
    <text evidence="2 5 6 8 10 11 15">Belongs to a multiprotein cell-cell adhesion complex that also contains E-cadherin/CDH1, alpha-catenin/CTNNA1, beta-catenin/CTNNB1, and gamma-catenin/JUP. Binds to the C-terminal fragment of PSEN1 and mutually competes for CDH1 (By similarity). Interacts with ZBTB33 (PubMed:10207085, PubMed:12087177). Interacts with GLIS2 (PubMed:17344476). Interacts with FER (By similarity). Interacts with NANOS1 (via N-terminal region) (By similarity). Interacts (via N-terminus) with GNA12; the interaction regulates CDH1-mediated cell-cell adhesion (PubMed:15240885). Interacts with GNA13 (PubMed:15240885). Component of a cadherin:catenin adhesion complex composed of at least of CDH26, beta-catenin/CTNNB1, alpha-catenin/CTNNA1 and p120 catenin/CTNND1 (By similarity). Interacts with CCDC85B (By similarity). Interacts with PLPP3; negatively regulates the PLPP3-mediated stabilization of CTNNB1 (By similarity). Interacts with DSG3; the interaction facilitates DSG3 localization and retention at cell-cell junctions (PubMed:18343367). Interacts with CTNND1/p120-catenin; the interaction controls CADH5 endocytosis (PubMed:33972531).</text>
</comment>
<comment type="interaction">
    <interactant intactId="EBI-529924">
        <id>P30999</id>
    </interactant>
    <interactant intactId="EBI-397955">
        <id>Q60598</id>
        <label>Cttn</label>
    </interactant>
    <organismsDiffer>false</organismsDiffer>
    <experiments>4</experiments>
</comment>
<comment type="interaction">
    <interactant intactId="EBI-529924">
        <id>P30999</id>
    </interactant>
    <interactant intactId="EBI-397236">
        <id>P35235</id>
        <label>Ptpn11</label>
    </interactant>
    <organismsDiffer>false</organismsDiffer>
    <experiments>3</experiments>
</comment>
<comment type="interaction">
    <interactant intactId="EBI-529924">
        <id>P30999</id>
    </interactant>
    <interactant intactId="EBI-1216314">
        <id>Q8BN78</id>
        <label>Zbtb33</label>
    </interactant>
    <organismsDiffer>false</organismsDiffer>
    <experiments>3</experiments>
</comment>
<comment type="subcellular location">
    <subcellularLocation>
        <location evidence="12 14 15">Cell junction</location>
        <location evidence="12 14 15">Adherens junction</location>
    </subcellularLocation>
    <subcellularLocation>
        <location evidence="7 10 14">Cytoplasm</location>
    </subcellularLocation>
    <subcellularLocation>
        <location evidence="7 10">Nucleus</location>
    </subcellularLocation>
    <subcellularLocation>
        <location evidence="10 12">Cell membrane</location>
    </subcellularLocation>
    <subcellularLocation>
        <location evidence="11">Cell junction</location>
    </subcellularLocation>
    <text evidence="2 10 14">Interaction with GLIS2 promotes nuclear translocation (PubMed:17344476). Detected at cell-cell contacts (By similarity). NANOS1 induces its translocation from sites of cell-cell contact to the cytoplasm (By similarity). CDH1 enhances cell membrane localization (By similarity). Localizes to cell-cell contacts as keratinocyte differentiation progresses (PubMed:27375112).</text>
</comment>
<comment type="subcellular location">
    <molecule>Isoform 2</molecule>
    <subcellularLocation>
        <location evidence="7">Nucleus</location>
    </subcellularLocation>
</comment>
<comment type="alternative products">
    <event type="alternative splicing"/>
    <isoform>
        <id>P30999-1</id>
        <name>1</name>
        <sequence type="displayed"/>
    </isoform>
    <isoform>
        <id>P30999-2</id>
        <name>2</name>
        <sequence type="described" ref="VSP_030567 VSP_030568"/>
    </isoform>
    <isoform>
        <id>P30999-3</id>
        <name>3</name>
        <sequence type="described" ref="VSP_030568"/>
    </isoform>
</comment>
<comment type="tissue specificity">
    <text evidence="12">Expressed in basal keratinocytes (at protein level).</text>
</comment>
<comment type="developmental stage">
    <text evidence="13">Expressed at the outer limiting membrane of the retina at 18.5 dpc.</text>
</comment>
<comment type="domain">
    <text evidence="1">ARM repeats 1 to 5 mediate interaction with cadherins.</text>
</comment>
<comment type="PTM">
    <text evidence="1">Phosphorylated by FER and other protein-tyrosine kinases. Phosphorylated at Ser-288 by PAK5. Dephosphorylated by PTPRJ (By similarity).</text>
</comment>
<comment type="similarity">
    <text evidence="19">Belongs to the beta-catenin family.</text>
</comment>
<comment type="sequence caution" evidence="19">
    <conflict type="erroneous initiation">
        <sequence resource="EMBL-CDS" id="BAC41421"/>
    </conflict>
    <text>Extended N-terminus.</text>
</comment>
<organism>
    <name type="scientific">Mus musculus</name>
    <name type="common">Mouse</name>
    <dbReference type="NCBI Taxonomy" id="10090"/>
    <lineage>
        <taxon>Eukaryota</taxon>
        <taxon>Metazoa</taxon>
        <taxon>Chordata</taxon>
        <taxon>Craniata</taxon>
        <taxon>Vertebrata</taxon>
        <taxon>Euteleostomi</taxon>
        <taxon>Mammalia</taxon>
        <taxon>Eutheria</taxon>
        <taxon>Euarchontoglires</taxon>
        <taxon>Glires</taxon>
        <taxon>Rodentia</taxon>
        <taxon>Myomorpha</taxon>
        <taxon>Muroidea</taxon>
        <taxon>Muridae</taxon>
        <taxon>Murinae</taxon>
        <taxon>Mus</taxon>
        <taxon>Mus</taxon>
    </lineage>
</organism>
<reference key="1">
    <citation type="journal article" date="1992" name="Oncogene">
        <title>p120, a novel substrate of protein tyrosine kinase receptors and of p60v-src, is related to cadherin-binding factors beta-catenin, plakoglobin and armadillo.</title>
        <authorList>
            <person name="Reynolds A.B."/>
            <person name="Herbert L."/>
            <person name="Cleveland J.L."/>
            <person name="Berg S.T."/>
            <person name="Gaut J.R."/>
        </authorList>
    </citation>
    <scope>NUCLEOTIDE SEQUENCE [MRNA] (ISOFORM 2)</scope>
    <source>
        <strain>SWR/J</strain>
    </source>
</reference>
<reference key="2">
    <citation type="submission" date="1992-12" db="EMBL/GenBank/DDBJ databases">
        <authorList>
            <person name="Reynolds A.B."/>
        </authorList>
    </citation>
    <scope>SEQUENCE REVISION</scope>
</reference>
<reference key="3">
    <citation type="journal article" date="2002" name="DNA Res.">
        <title>Prediction of the coding sequences of mouse homologues of KIAA gene: I. The complete nucleotide sequences of 100 mouse KIAA-homologous cDNAs identified by screening of terminal sequences of cDNA clones randomly sampled from size-fractionated libraries.</title>
        <authorList>
            <person name="Okazaki N."/>
            <person name="Kikuno R."/>
            <person name="Ohara R."/>
            <person name="Inamoto S."/>
            <person name="Hara Y."/>
            <person name="Nagase T."/>
            <person name="Ohara O."/>
            <person name="Koga H."/>
        </authorList>
    </citation>
    <scope>NUCLEOTIDE SEQUENCE [LARGE SCALE MRNA] (ISOFORM 3)</scope>
    <source>
        <tissue>Brain</tissue>
    </source>
</reference>
<reference key="4">
    <citation type="journal article" date="2005" name="Science">
        <title>The transcriptional landscape of the mammalian genome.</title>
        <authorList>
            <person name="Carninci P."/>
            <person name="Kasukawa T."/>
            <person name="Katayama S."/>
            <person name="Gough J."/>
            <person name="Frith M.C."/>
            <person name="Maeda N."/>
            <person name="Oyama R."/>
            <person name="Ravasi T."/>
            <person name="Lenhard B."/>
            <person name="Wells C."/>
            <person name="Kodzius R."/>
            <person name="Shimokawa K."/>
            <person name="Bajic V.B."/>
            <person name="Brenner S.E."/>
            <person name="Batalov S."/>
            <person name="Forrest A.R."/>
            <person name="Zavolan M."/>
            <person name="Davis M.J."/>
            <person name="Wilming L.G."/>
            <person name="Aidinis V."/>
            <person name="Allen J.E."/>
            <person name="Ambesi-Impiombato A."/>
            <person name="Apweiler R."/>
            <person name="Aturaliya R.N."/>
            <person name="Bailey T.L."/>
            <person name="Bansal M."/>
            <person name="Baxter L."/>
            <person name="Beisel K.W."/>
            <person name="Bersano T."/>
            <person name="Bono H."/>
            <person name="Chalk A.M."/>
            <person name="Chiu K.P."/>
            <person name="Choudhary V."/>
            <person name="Christoffels A."/>
            <person name="Clutterbuck D.R."/>
            <person name="Crowe M.L."/>
            <person name="Dalla E."/>
            <person name="Dalrymple B.P."/>
            <person name="de Bono B."/>
            <person name="Della Gatta G."/>
            <person name="di Bernardo D."/>
            <person name="Down T."/>
            <person name="Engstrom P."/>
            <person name="Fagiolini M."/>
            <person name="Faulkner G."/>
            <person name="Fletcher C.F."/>
            <person name="Fukushima T."/>
            <person name="Furuno M."/>
            <person name="Futaki S."/>
            <person name="Gariboldi M."/>
            <person name="Georgii-Hemming P."/>
            <person name="Gingeras T.R."/>
            <person name="Gojobori T."/>
            <person name="Green R.E."/>
            <person name="Gustincich S."/>
            <person name="Harbers M."/>
            <person name="Hayashi Y."/>
            <person name="Hensch T.K."/>
            <person name="Hirokawa N."/>
            <person name="Hill D."/>
            <person name="Huminiecki L."/>
            <person name="Iacono M."/>
            <person name="Ikeo K."/>
            <person name="Iwama A."/>
            <person name="Ishikawa T."/>
            <person name="Jakt M."/>
            <person name="Kanapin A."/>
            <person name="Katoh M."/>
            <person name="Kawasawa Y."/>
            <person name="Kelso J."/>
            <person name="Kitamura H."/>
            <person name="Kitano H."/>
            <person name="Kollias G."/>
            <person name="Krishnan S.P."/>
            <person name="Kruger A."/>
            <person name="Kummerfeld S.K."/>
            <person name="Kurochkin I.V."/>
            <person name="Lareau L.F."/>
            <person name="Lazarevic D."/>
            <person name="Lipovich L."/>
            <person name="Liu J."/>
            <person name="Liuni S."/>
            <person name="McWilliam S."/>
            <person name="Madan Babu M."/>
            <person name="Madera M."/>
            <person name="Marchionni L."/>
            <person name="Matsuda H."/>
            <person name="Matsuzawa S."/>
            <person name="Miki H."/>
            <person name="Mignone F."/>
            <person name="Miyake S."/>
            <person name="Morris K."/>
            <person name="Mottagui-Tabar S."/>
            <person name="Mulder N."/>
            <person name="Nakano N."/>
            <person name="Nakauchi H."/>
            <person name="Ng P."/>
            <person name="Nilsson R."/>
            <person name="Nishiguchi S."/>
            <person name="Nishikawa S."/>
            <person name="Nori F."/>
            <person name="Ohara O."/>
            <person name="Okazaki Y."/>
            <person name="Orlando V."/>
            <person name="Pang K.C."/>
            <person name="Pavan W.J."/>
            <person name="Pavesi G."/>
            <person name="Pesole G."/>
            <person name="Petrovsky N."/>
            <person name="Piazza S."/>
            <person name="Reed J."/>
            <person name="Reid J.F."/>
            <person name="Ring B.Z."/>
            <person name="Ringwald M."/>
            <person name="Rost B."/>
            <person name="Ruan Y."/>
            <person name="Salzberg S.L."/>
            <person name="Sandelin A."/>
            <person name="Schneider C."/>
            <person name="Schoenbach C."/>
            <person name="Sekiguchi K."/>
            <person name="Semple C.A."/>
            <person name="Seno S."/>
            <person name="Sessa L."/>
            <person name="Sheng Y."/>
            <person name="Shibata Y."/>
            <person name="Shimada H."/>
            <person name="Shimada K."/>
            <person name="Silva D."/>
            <person name="Sinclair B."/>
            <person name="Sperling S."/>
            <person name="Stupka E."/>
            <person name="Sugiura K."/>
            <person name="Sultana R."/>
            <person name="Takenaka Y."/>
            <person name="Taki K."/>
            <person name="Tammoja K."/>
            <person name="Tan S.L."/>
            <person name="Tang S."/>
            <person name="Taylor M.S."/>
            <person name="Tegner J."/>
            <person name="Teichmann S.A."/>
            <person name="Ueda H.R."/>
            <person name="van Nimwegen E."/>
            <person name="Verardo R."/>
            <person name="Wei C.L."/>
            <person name="Yagi K."/>
            <person name="Yamanishi H."/>
            <person name="Zabarovsky E."/>
            <person name="Zhu S."/>
            <person name="Zimmer A."/>
            <person name="Hide W."/>
            <person name="Bult C."/>
            <person name="Grimmond S.M."/>
            <person name="Teasdale R.D."/>
            <person name="Liu E.T."/>
            <person name="Brusic V."/>
            <person name="Quackenbush J."/>
            <person name="Wahlestedt C."/>
            <person name="Mattick J.S."/>
            <person name="Hume D.A."/>
            <person name="Kai C."/>
            <person name="Sasaki D."/>
            <person name="Tomaru Y."/>
            <person name="Fukuda S."/>
            <person name="Kanamori-Katayama M."/>
            <person name="Suzuki M."/>
            <person name="Aoki J."/>
            <person name="Arakawa T."/>
            <person name="Iida J."/>
            <person name="Imamura K."/>
            <person name="Itoh M."/>
            <person name="Kato T."/>
            <person name="Kawaji H."/>
            <person name="Kawagashira N."/>
            <person name="Kawashima T."/>
            <person name="Kojima M."/>
            <person name="Kondo S."/>
            <person name="Konno H."/>
            <person name="Nakano K."/>
            <person name="Ninomiya N."/>
            <person name="Nishio T."/>
            <person name="Okada M."/>
            <person name="Plessy C."/>
            <person name="Shibata K."/>
            <person name="Shiraki T."/>
            <person name="Suzuki S."/>
            <person name="Tagami M."/>
            <person name="Waki K."/>
            <person name="Watahiki A."/>
            <person name="Okamura-Oho Y."/>
            <person name="Suzuki H."/>
            <person name="Kawai J."/>
            <person name="Hayashizaki Y."/>
        </authorList>
    </citation>
    <scope>NUCLEOTIDE SEQUENCE [LARGE SCALE MRNA] (ISOFORMS 1 AND 3)</scope>
    <source>
        <strain>C57BL/6J</strain>
        <tissue>Testis</tissue>
    </source>
</reference>
<reference key="5">
    <citation type="journal article" date="2004" name="Genome Res.">
        <title>The status, quality, and expansion of the NIH full-length cDNA project: the Mammalian Gene Collection (MGC).</title>
        <authorList>
            <consortium name="The MGC Project Team"/>
        </authorList>
    </citation>
    <scope>NUCLEOTIDE SEQUENCE [LARGE SCALE MRNA] (ISOFORM 1)</scope>
    <source>
        <strain>C57BL/6J</strain>
        <tissue>Brain</tissue>
    </source>
</reference>
<reference key="6">
    <citation type="journal article" date="1999" name="Mol. Cell. Biol.">
        <title>The catenin p120(ctn) interacts with Kaiso, a novel BTB/POZ domain zinc finger transcription factor.</title>
        <authorList>
            <person name="Daniel J.M."/>
            <person name="Reynolds A.B."/>
        </authorList>
    </citation>
    <scope>INTERACTION WITH ZBTB33</scope>
</reference>
<reference key="7">
    <citation type="journal article" date="2002" name="Nucleic Acids Res.">
        <title>The p120(ctn)-binding partner Kaiso is a bi-modal DNA-binding protein that recognizes both a sequence-specific consensus and methylated CpG dinucleotides.</title>
        <authorList>
            <person name="Daniel J.M."/>
            <person name="Spring C.M."/>
            <person name="Crawford H.C."/>
            <person name="Reynolds A.B."/>
            <person name="Baig A."/>
        </authorList>
    </citation>
    <scope>INTERACTION WITH ZBTB33</scope>
</reference>
<reference key="8">
    <citation type="journal article" date="2004" name="J. Cell Sci.">
        <title>NLS-dependent nuclear localization of p120ctn is necessary to relieve Kaiso-mediated transcriptional repression.</title>
        <authorList>
            <person name="Kelly K.F."/>
            <person name="Spring C.M."/>
            <person name="Otchere A.A."/>
            <person name="Daniel J.M."/>
        </authorList>
    </citation>
    <scope>FUNCTION</scope>
    <scope>NUCLEAR LOCALIZATION SIGNAL</scope>
    <scope>SUBCELLULAR LOCATION</scope>
    <scope>MUTAGENESIS OF 622-LYS-LYS-623</scope>
</reference>
<reference key="9">
    <citation type="journal article" date="2004" name="J. Cell Sci.">
        <authorList>
            <person name="Kelly K.F."/>
            <person name="Spring C.M."/>
            <person name="Otchere A.A."/>
            <person name="Daniel J.M."/>
        </authorList>
    </citation>
    <scope>ERRATUM OF PUBMED:15138284</scope>
</reference>
<reference key="10">
    <citation type="journal article" date="2004" name="Proc. Natl. Acad. Sci. U.S.A.">
        <title>A role for Galpha12/Galpha13 in p120ctn regulation.</title>
        <authorList>
            <person name="Krakstad B.F."/>
            <person name="Ardawatia V.V."/>
            <person name="Aragay A.M."/>
        </authorList>
    </citation>
    <scope>INTERACTION WITH GNA12 AND GNA13</scope>
</reference>
<reference key="11">
    <citation type="journal article" date="2005" name="Exp. Cell Res.">
        <title>The catenin p120ctn inhibits Kaiso-mediated transcriptional repression of the beta-catenin/TCF target gene matrilysin.</title>
        <authorList>
            <person name="Spring C.M."/>
            <person name="Kelly K.F."/>
            <person name="O'Kelly I."/>
            <person name="Graham M."/>
            <person name="Crawford H.C."/>
            <person name="Daniel J.M."/>
        </authorList>
    </citation>
    <scope>FUNCTION</scope>
</reference>
<reference key="12">
    <citation type="journal article" date="2005" name="Nat. Biotechnol.">
        <title>Immunoaffinity profiling of tyrosine phosphorylation in cancer cells.</title>
        <authorList>
            <person name="Rush J."/>
            <person name="Moritz A."/>
            <person name="Lee K.A."/>
            <person name="Guo A."/>
            <person name="Goss V.L."/>
            <person name="Spek E.J."/>
            <person name="Zhang H."/>
            <person name="Zha X.-M."/>
            <person name="Polakiewicz R.D."/>
            <person name="Comb M.J."/>
        </authorList>
    </citation>
    <scope>PHOSPHORYLATION [LARGE SCALE ANALYSIS] AT TYR-217; TYR-221 AND TYR-280</scope>
    <scope>IDENTIFICATION BY MASS SPECTROMETRY [LARGE SCALE ANALYSIS]</scope>
</reference>
<reference key="13">
    <citation type="journal article" date="2007" name="J. Immunol.">
        <title>Quantitative time-resolved phosphoproteomic analysis of mast cell signaling.</title>
        <authorList>
            <person name="Cao L."/>
            <person name="Yu K."/>
            <person name="Banh C."/>
            <person name="Nguyen V."/>
            <person name="Ritz A."/>
            <person name="Raphael B.J."/>
            <person name="Kawakami Y."/>
            <person name="Kawakami T."/>
            <person name="Salomon A.R."/>
        </authorList>
    </citation>
    <scope>PHOSPHORYLATION [LARGE SCALE ANALYSIS] AT TYR-904</scope>
    <scope>IDENTIFICATION BY MASS SPECTROMETRY [LARGE SCALE ANALYSIS]</scope>
    <source>
        <tissue>Mast cell</tissue>
    </source>
</reference>
<reference key="14">
    <citation type="journal article" date="2007" name="Mol. Biol. Cell">
        <title>The transcriptional repressor Glis2 is a novel binding partner for p120 catenin.</title>
        <authorList>
            <person name="Hosking C.R."/>
            <person name="Ulloa F."/>
            <person name="Hogan C."/>
            <person name="Ferber E.C."/>
            <person name="Figueroa A."/>
            <person name="Gevaert K."/>
            <person name="Birchmeier W."/>
            <person name="Briscoe J."/>
            <person name="Fujita Y."/>
        </authorList>
    </citation>
    <scope>INTERACTION WITH GLIS2</scope>
    <scope>FUNCTION</scope>
    <scope>SUBCELLULAR LOCATION</scope>
</reference>
<reference key="15">
    <citation type="journal article" date="2007" name="Proc. Natl. Acad. Sci. U.S.A.">
        <title>Large-scale phosphorylation analysis of mouse liver.</title>
        <authorList>
            <person name="Villen J."/>
            <person name="Beausoleil S.A."/>
            <person name="Gerber S.A."/>
            <person name="Gygi S.P."/>
        </authorList>
    </citation>
    <scope>PHOSPHORYLATION [LARGE SCALE ANALYSIS] AT SER-230; SER-252; SER-288; SER-349; SER-847; SER-857; TYR-865 AND SER-899</scope>
    <scope>IDENTIFICATION BY MASS SPECTROMETRY [LARGE SCALE ANALYSIS]</scope>
    <source>
        <tissue>Liver</tissue>
    </source>
</reference>
<reference key="16">
    <citation type="journal article" date="2008" name="Exp. Cell Res.">
        <title>P120-catenin is a novel desmoglein 3 interacting partner: identification of the p120-catenin association site of desmoglein 3.</title>
        <authorList>
            <person name="Kanno M."/>
            <person name="Isa Y."/>
            <person name="Aoyama Y."/>
            <person name="Yamamoto Y."/>
            <person name="Nagai M."/>
            <person name="Ozawa M."/>
            <person name="Kitajima Y."/>
        </authorList>
    </citation>
    <scope>FUNCTION</scope>
    <scope>INTERACTION WITH DSG3</scope>
    <scope>SUBCELLULAR LOCATION</scope>
</reference>
<reference key="17">
    <citation type="journal article" date="2008" name="J. Proteome Res.">
        <title>Specific phosphopeptide enrichment with immobilized titanium ion affinity chromatography adsorbent for phosphoproteome analysis.</title>
        <authorList>
            <person name="Zhou H."/>
            <person name="Ye M."/>
            <person name="Dong J."/>
            <person name="Han G."/>
            <person name="Jiang X."/>
            <person name="Wu R."/>
            <person name="Zou H."/>
        </authorList>
    </citation>
    <scope>PHOSPHORYLATION [LARGE SCALE ANALYSIS] AT SER-349</scope>
    <scope>IDENTIFICATION BY MASS SPECTROMETRY [LARGE SCALE ANALYSIS]</scope>
    <source>
        <tissue>Liver</tissue>
    </source>
</reference>
<reference key="18">
    <citation type="journal article" date="2009" name="Hum. Mutat.">
        <title>Cytokines as genetic modifiers in K5-/- mice and in human epidermolysis bullosa simplex.</title>
        <authorList>
            <person name="Roth W."/>
            <person name="Reuter U."/>
            <person name="Wohlenberg C."/>
            <person name="Bruckner-Tuderman L."/>
            <person name="Magin T.M."/>
        </authorList>
    </citation>
    <scope>SUBCELLULAR LOCATION</scope>
    <scope>TISSUE SPECIFICITY</scope>
</reference>
<reference key="19">
    <citation type="journal article" date="2009" name="Immunity">
        <title>The phagosomal proteome in interferon-gamma-activated macrophages.</title>
        <authorList>
            <person name="Trost M."/>
            <person name="English L."/>
            <person name="Lemieux S."/>
            <person name="Courcelles M."/>
            <person name="Desjardins M."/>
            <person name="Thibault P."/>
        </authorList>
    </citation>
    <scope>IDENTIFICATION BY MASS SPECTROMETRY [LARGE SCALE ANALYSIS]</scope>
</reference>
<reference key="20">
    <citation type="journal article" date="2009" name="Mol. Cell. Proteomics">
        <title>Large scale localization of protein phosphorylation by use of electron capture dissociation mass spectrometry.</title>
        <authorList>
            <person name="Sweet S.M."/>
            <person name="Bailey C.M."/>
            <person name="Cunningham D.L."/>
            <person name="Heath J.K."/>
            <person name="Cooper H.J."/>
        </authorList>
    </citation>
    <scope>PHOSPHORYLATION [LARGE SCALE ANALYSIS] AT TYR-228; TYR-257; SER-349; SER-352 AND TYR-904</scope>
    <scope>IDENTIFICATION BY MASS SPECTROMETRY [LARGE SCALE ANALYSIS]</scope>
    <source>
        <tissue>Embryonic fibroblast</tissue>
    </source>
</reference>
<reference key="21">
    <citation type="journal article" date="2010" name="Cell">
        <title>A tissue-specific atlas of mouse protein phosphorylation and expression.</title>
        <authorList>
            <person name="Huttlin E.L."/>
            <person name="Jedrychowski M.P."/>
            <person name="Elias J.E."/>
            <person name="Goswami T."/>
            <person name="Rad R."/>
            <person name="Beausoleil S.A."/>
            <person name="Villen J."/>
            <person name="Haas W."/>
            <person name="Sowa M.E."/>
            <person name="Gygi S.P."/>
        </authorList>
    </citation>
    <scope>PHOSPHORYLATION [LARGE SCALE ANALYSIS] AT SER-47; THR-59; SER-225; SER-230; SER-252; SER-269; SER-288; TYR-291; SER-300; THR-304; SER-320; SER-349; SER-352; SER-713; SER-847; SER-857; SER-864; TYR-865; SER-868; THR-869; SER-899 AND SER-920</scope>
    <scope>IDENTIFICATION BY MASS SPECTROMETRY [LARGE SCALE ANALYSIS]</scope>
    <source>
        <tissue>Brain</tissue>
        <tissue>Brown adipose tissue</tissue>
        <tissue>Heart</tissue>
        <tissue>Kidney</tissue>
        <tissue>Liver</tissue>
        <tissue>Lung</tissue>
        <tissue>Pancreas</tissue>
        <tissue>Spleen</tissue>
        <tissue>Testis</tissue>
    </source>
</reference>
<reference key="22">
    <citation type="journal article" date="2013" name="Hum. Mol. Genet.">
        <title>Loss of CRB2 in the mouse retina mimics human retinitis pigmentosa due to mutations in the CRB1 gene.</title>
        <authorList>
            <person name="Alves C.H."/>
            <person name="Sanz A.S."/>
            <person name="Park B."/>
            <person name="Pellissier L.P."/>
            <person name="Tanimoto N."/>
            <person name="Beck S.C."/>
            <person name="Huber G."/>
            <person name="Murtaza M."/>
            <person name="Richard F."/>
            <person name="Sridevi Gurubaran I."/>
            <person name="Garcia Garrido M."/>
            <person name="Levelt C.N."/>
            <person name="Rashbass P."/>
            <person name="Le Bivic A."/>
            <person name="Seeliger M.W."/>
            <person name="Wijnholds J."/>
        </authorList>
    </citation>
    <scope>DEVELOPMENTAL STAGE</scope>
</reference>
<reference key="23">
    <citation type="journal article" date="2016" name="J. Invest. Dermatol.">
        <title>Antagonistic Regulation of Intercellular Cohesion by Plakophilins 1 and 3.</title>
        <authorList>
            <person name="Keil R."/>
            <person name="Rietscher K."/>
            <person name="Hatzfeld M."/>
        </authorList>
    </citation>
    <scope>SUBCELLULAR LOCATION</scope>
</reference>
<reference key="24">
    <citation type="journal article" date="2021" name="Nat. Commun.">
        <title>A junctional PACSIN2/EHD4/MICAL-L1 complex coordinates VE-cadherin trafficking for endothelial migration and angiogenesis.</title>
        <authorList>
            <person name="Malinova T.S."/>
            <person name="Angulo-Urarte A."/>
            <person name="Nuechel J."/>
            <person name="Tauber M."/>
            <person name="van der Stoel M.M."/>
            <person name="Janssen V."/>
            <person name="de Haan A."/>
            <person name="Groenen A.G."/>
            <person name="Tebbens M."/>
            <person name="Graupera M."/>
            <person name="Plomann M."/>
            <person name="Huveneers S."/>
        </authorList>
    </citation>
    <scope>FUNCTION</scope>
    <scope>SUBCELLULAR LOCATION</scope>
    <scope>INTERACTION WITH CDH5</scope>
</reference>
<sequence length="938" mass="104925">MDDSEVESTASILASVKEQEAQFEKLTRALEEERRHVSAQLERVRVSPQDANSLMANGTLTRRHQNGRFVGDADLERQKFSDLKLNGPQDHNHLLYSTIPRMQEPGQIVETYTEEDPEGAMSVVSVETTDDGTTRRTETTVKKVVKTMTTRTVQPVPMGPDGLPVDASAVSNNYIQTLGRDFRKNGNGGPGPYVGQAGTATLPRNFHYPPDGYGRHYEDGYPGGSDNYGSLSRVTRIEERYRPSMEGYRAPSRQDVYGPQPQVRVGGSSVDLHRFHPEPYGLEDDQRSMGYDDLDYGMMSDYGTARRTGTPSDPRRRLRSYEDMIGEEVPPDQYYWAPLAQHERGSLASLDSLRKGMPPPSNWRQPELPEVIAMLGFRLDAVKSNAAAYLQHLCYRNDKVKTDVRKLKGIPILVGLLDHPKKEVHLGACGALKNISFGRDQDNKIAIKNCDGVPALVRLLRKARDMDLTEVITGTLWNLSSHDSIKMEIVDHALHALTDEVIIPHSGWEREPNEDCKPRHIEWESVLTNTAGCLRNVSSERSEARRKLRECDGLVDALIFIVQAEIGQKDSDSKLVENCVCLLRNLSYQVHREIPQAERYQEALPTVANSTGPHAASCFGAKKGKDEWFSRGKKPTEDPANDTVDFPKRTSPARGYELLFQPEVVRIYISLLKESKTPAILEASAGAIQNLCAGRWTYGRYIRSALRQEKALSAIAELLTSEHERVVKAASGALRNLAVDARNKELIGKHAIPNLVKNLPGGQQNSSWNFSEDTVVSILNTINEVIAENLEAAKKLRETQGIEKLVLINKSGNRSEKEVRAAALVLQTIWGYKELRKPLEKEGWKKSDFQVNLNNASRSQSSHSYDDSTLPLIDRNQKSDKKPDREEIPMSNMGSNTKSLDNNYSTLNERGDHNRTLDRSGDLGDMEPLKGAPLMQKI</sequence>
<protein>
    <recommendedName>
        <fullName>Catenin delta-1</fullName>
    </recommendedName>
    <alternativeName>
        <fullName>Cadherin-associated Src substrate</fullName>
        <shortName>CAS</shortName>
    </alternativeName>
    <alternativeName>
        <fullName>p120 catenin</fullName>
        <shortName>p120(ctn)</shortName>
    </alternativeName>
    <alternativeName>
        <fullName>p120(cas)</fullName>
    </alternativeName>
</protein>
<dbReference type="EMBL" id="Z17804">
    <property type="protein sequence ID" value="CAA79078.1"/>
    <property type="molecule type" value="mRNA"/>
</dbReference>
<dbReference type="EMBL" id="AB093237">
    <property type="protein sequence ID" value="BAC41421.1"/>
    <property type="status" value="ALT_INIT"/>
    <property type="molecule type" value="mRNA"/>
</dbReference>
<dbReference type="EMBL" id="AK133193">
    <property type="protein sequence ID" value="BAE21551.1"/>
    <property type="molecule type" value="mRNA"/>
</dbReference>
<dbReference type="EMBL" id="AK161790">
    <property type="protein sequence ID" value="BAE36576.1"/>
    <property type="molecule type" value="mRNA"/>
</dbReference>
<dbReference type="EMBL" id="BC043108">
    <property type="protein sequence ID" value="AAH43108.1"/>
    <property type="molecule type" value="mRNA"/>
</dbReference>
<dbReference type="EMBL" id="BC054544">
    <property type="protein sequence ID" value="AAH54544.1"/>
    <property type="molecule type" value="mRNA"/>
</dbReference>
<dbReference type="CCDS" id="CCDS16186.1">
    <molecule id="P30999-1"/>
</dbReference>
<dbReference type="CCDS" id="CCDS50622.1">
    <molecule id="P30999-2"/>
</dbReference>
<dbReference type="CCDS" id="CCDS50623.1">
    <molecule id="P30999-3"/>
</dbReference>
<dbReference type="PIR" id="I48701">
    <property type="entry name" value="S28498"/>
</dbReference>
<dbReference type="RefSeq" id="NP_001078917.1">
    <molecule id="P30999-3"/>
    <property type="nucleotide sequence ID" value="NM_001085448.1"/>
</dbReference>
<dbReference type="RefSeq" id="NP_001078918.1">
    <property type="nucleotide sequence ID" value="NM_001085449.1"/>
</dbReference>
<dbReference type="RefSeq" id="NP_001078919.1">
    <molecule id="P30999-1"/>
    <property type="nucleotide sequence ID" value="NM_001085450.1"/>
</dbReference>
<dbReference type="RefSeq" id="NP_001078922.1">
    <molecule id="P30999-2"/>
    <property type="nucleotide sequence ID" value="NM_001085453.2"/>
</dbReference>
<dbReference type="RefSeq" id="NP_001341993.1">
    <molecule id="P30999-1"/>
    <property type="nucleotide sequence ID" value="NM_001355064.1"/>
</dbReference>
<dbReference type="RefSeq" id="NP_001341994.1">
    <molecule id="P30999-3"/>
    <property type="nucleotide sequence ID" value="NM_001355065.1"/>
</dbReference>
<dbReference type="RefSeq" id="NP_031641.2">
    <molecule id="P30999-1"/>
    <property type="nucleotide sequence ID" value="NM_007615.4"/>
</dbReference>
<dbReference type="RefSeq" id="XP_006498698.1">
    <property type="nucleotide sequence ID" value="XM_006498635.1"/>
</dbReference>
<dbReference type="RefSeq" id="XP_017170690.1">
    <property type="nucleotide sequence ID" value="XM_017315201.1"/>
</dbReference>
<dbReference type="RefSeq" id="XP_017170697.1">
    <molecule id="P30999-3"/>
    <property type="nucleotide sequence ID" value="XM_017315208.3"/>
</dbReference>
<dbReference type="RefSeq" id="XP_036013728.1">
    <molecule id="P30999-2"/>
    <property type="nucleotide sequence ID" value="XM_036157835.1"/>
</dbReference>
<dbReference type="SMR" id="P30999"/>
<dbReference type="BioGRID" id="198513">
    <property type="interactions" value="40"/>
</dbReference>
<dbReference type="CORUM" id="P30999"/>
<dbReference type="DIP" id="DIP-31972N"/>
<dbReference type="FunCoup" id="P30999">
    <property type="interactions" value="2005"/>
</dbReference>
<dbReference type="IntAct" id="P30999">
    <property type="interactions" value="20"/>
</dbReference>
<dbReference type="MINT" id="P30999"/>
<dbReference type="STRING" id="10090.ENSMUSP00000064518"/>
<dbReference type="GlyConnect" id="2420">
    <molecule id="P30999-2"/>
    <property type="glycosylation" value="5 N-Linked glycans (1 site)"/>
</dbReference>
<dbReference type="GlyCosmos" id="P30999">
    <property type="glycosylation" value="1 site, 5 glycans"/>
</dbReference>
<dbReference type="GlyGen" id="P30999">
    <property type="glycosylation" value="7 sites, 9 N-linked glycans (5 sites), 1 O-linked glycan (2 sites)"/>
</dbReference>
<dbReference type="iPTMnet" id="P30999"/>
<dbReference type="PhosphoSitePlus" id="P30999"/>
<dbReference type="SwissPalm" id="P30999"/>
<dbReference type="CPTAC" id="non-CPTAC-3781"/>
<dbReference type="jPOST" id="P30999"/>
<dbReference type="PaxDb" id="10090-ENSMUSP00000064518"/>
<dbReference type="PeptideAtlas" id="P30999"/>
<dbReference type="ProteomicsDB" id="284057">
    <molecule id="P30999-1"/>
</dbReference>
<dbReference type="ProteomicsDB" id="284058">
    <molecule id="P30999-2"/>
</dbReference>
<dbReference type="ProteomicsDB" id="284059">
    <molecule id="P30999-3"/>
</dbReference>
<dbReference type="Pumba" id="P30999"/>
<dbReference type="DNASU" id="12388"/>
<dbReference type="Ensembl" id="ENSMUST00000036811.13">
    <molecule id="P30999-3"/>
    <property type="protein sequence ID" value="ENSMUSP00000042543.7"/>
    <property type="gene ID" value="ENSMUSG00000034101.15"/>
</dbReference>
<dbReference type="Ensembl" id="ENSMUST00000066177.10">
    <molecule id="P30999-2"/>
    <property type="protein sequence ID" value="ENSMUSP00000065252.4"/>
    <property type="gene ID" value="ENSMUSG00000034101.15"/>
</dbReference>
<dbReference type="Ensembl" id="ENSMUST00000067232.10">
    <molecule id="P30999-1"/>
    <property type="protein sequence ID" value="ENSMUSP00000064518.4"/>
    <property type="gene ID" value="ENSMUSG00000034101.15"/>
</dbReference>
<dbReference type="Ensembl" id="ENSMUST00000111691.2">
    <molecule id="P30999-1"/>
    <property type="protein sequence ID" value="ENSMUSP00000107320.2"/>
    <property type="gene ID" value="ENSMUSG00000034101.15"/>
</dbReference>
<dbReference type="Ensembl" id="ENSMUST00000111697.9">
    <molecule id="P30999-3"/>
    <property type="protein sequence ID" value="ENSMUSP00000107326.3"/>
    <property type="gene ID" value="ENSMUSG00000034101.15"/>
</dbReference>
<dbReference type="Ensembl" id="ENSMUST00000189772.2">
    <molecule id="P30999-1"/>
    <property type="protein sequence ID" value="ENSMUSP00000141166.2"/>
    <property type="gene ID" value="ENSMUSG00000101645.2"/>
</dbReference>
<dbReference type="GeneID" id="12388"/>
<dbReference type="KEGG" id="mmu:12388"/>
<dbReference type="UCSC" id="uc008kio.1">
    <molecule id="P30999-3"/>
    <property type="organism name" value="mouse"/>
</dbReference>
<dbReference type="UCSC" id="uc008kip.1">
    <molecule id="P30999-1"/>
    <property type="organism name" value="mouse"/>
</dbReference>
<dbReference type="UCSC" id="uc008kit.1">
    <molecule id="P30999-2"/>
    <property type="organism name" value="mouse"/>
</dbReference>
<dbReference type="AGR" id="MGI:105100"/>
<dbReference type="CTD" id="1500"/>
<dbReference type="MGI" id="MGI:105100">
    <property type="gene designation" value="Ctnnd1"/>
</dbReference>
<dbReference type="VEuPathDB" id="HostDB:ENSMUSG00000034101"/>
<dbReference type="VEuPathDB" id="HostDB:ENSMUSG00000101645"/>
<dbReference type="eggNOG" id="KOG1048">
    <property type="taxonomic scope" value="Eukaryota"/>
</dbReference>
<dbReference type="GeneTree" id="ENSGT00940000156045"/>
<dbReference type="HOGENOM" id="CLU_009111_1_0_1"/>
<dbReference type="InParanoid" id="P30999"/>
<dbReference type="OMA" id="MVCITQG"/>
<dbReference type="OrthoDB" id="3245100at2759"/>
<dbReference type="PhylomeDB" id="P30999"/>
<dbReference type="TreeFam" id="TF321877"/>
<dbReference type="Reactome" id="R-MMU-418990">
    <property type="pathway name" value="Adherens junctions interactions"/>
</dbReference>
<dbReference type="Reactome" id="R-MMU-5218920">
    <property type="pathway name" value="VEGFR2 mediated vascular permeability"/>
</dbReference>
<dbReference type="Reactome" id="R-MMU-9762292">
    <property type="pathway name" value="Regulation of CDH11 function"/>
</dbReference>
<dbReference type="BioGRID-ORCS" id="12388">
    <property type="hits" value="2 hits in 29 CRISPR screens"/>
</dbReference>
<dbReference type="CD-CODE" id="CE726F99">
    <property type="entry name" value="Postsynaptic density"/>
</dbReference>
<dbReference type="ChiTaRS" id="Ctnnd1">
    <property type="organism name" value="mouse"/>
</dbReference>
<dbReference type="PRO" id="PR:P30999"/>
<dbReference type="Proteomes" id="UP000000589">
    <property type="component" value="Chromosome 2"/>
</dbReference>
<dbReference type="RNAct" id="P30999">
    <property type="molecule type" value="protein"/>
</dbReference>
<dbReference type="Bgee" id="ENSMUSG00000034101">
    <property type="expression patterns" value="Expressed in embryonic post-anal tail and 84 other cell types or tissues"/>
</dbReference>
<dbReference type="ExpressionAtlas" id="P30999">
    <property type="expression patterns" value="baseline and differential"/>
</dbReference>
<dbReference type="GO" id="GO:0005912">
    <property type="term" value="C:adherens junction"/>
    <property type="evidence" value="ECO:0000314"/>
    <property type="project" value="UniProtKB"/>
</dbReference>
<dbReference type="GO" id="GO:0016327">
    <property type="term" value="C:apicolateral plasma membrane"/>
    <property type="evidence" value="ECO:0000314"/>
    <property type="project" value="UniProtKB"/>
</dbReference>
<dbReference type="GO" id="GO:0005923">
    <property type="term" value="C:bicellular tight junction"/>
    <property type="evidence" value="ECO:0000314"/>
    <property type="project" value="MGI"/>
</dbReference>
<dbReference type="GO" id="GO:0005911">
    <property type="term" value="C:cell-cell junction"/>
    <property type="evidence" value="ECO:0000314"/>
    <property type="project" value="ARUK-UCL"/>
</dbReference>
<dbReference type="GO" id="GO:0005737">
    <property type="term" value="C:cytoplasm"/>
    <property type="evidence" value="ECO:0000314"/>
    <property type="project" value="UniProtKB"/>
</dbReference>
<dbReference type="GO" id="GO:0016600">
    <property type="term" value="C:flotillin complex"/>
    <property type="evidence" value="ECO:0000314"/>
    <property type="project" value="UniProtKB"/>
</dbReference>
<dbReference type="GO" id="GO:0030027">
    <property type="term" value="C:lamellipodium"/>
    <property type="evidence" value="ECO:0000314"/>
    <property type="project" value="MGI"/>
</dbReference>
<dbReference type="GO" id="GO:0016020">
    <property type="term" value="C:membrane"/>
    <property type="evidence" value="ECO:0000314"/>
    <property type="project" value="MGI"/>
</dbReference>
<dbReference type="GO" id="GO:0030496">
    <property type="term" value="C:midbody"/>
    <property type="evidence" value="ECO:0000250"/>
    <property type="project" value="UniProtKB"/>
</dbReference>
<dbReference type="GO" id="GO:0005634">
    <property type="term" value="C:nucleus"/>
    <property type="evidence" value="ECO:0000314"/>
    <property type="project" value="MGI"/>
</dbReference>
<dbReference type="GO" id="GO:0005886">
    <property type="term" value="C:plasma membrane"/>
    <property type="evidence" value="ECO:0000314"/>
    <property type="project" value="UniProtKB"/>
</dbReference>
<dbReference type="GO" id="GO:0098632">
    <property type="term" value="F:cell-cell adhesion mediator activity"/>
    <property type="evidence" value="ECO:0000314"/>
    <property type="project" value="UniProt"/>
</dbReference>
<dbReference type="GO" id="GO:0019904">
    <property type="term" value="F:protein domain specific binding"/>
    <property type="evidence" value="ECO:0000353"/>
    <property type="project" value="MGI"/>
</dbReference>
<dbReference type="GO" id="GO:0019903">
    <property type="term" value="F:protein phosphatase binding"/>
    <property type="evidence" value="ECO:0000353"/>
    <property type="project" value="UniProtKB"/>
</dbReference>
<dbReference type="GO" id="GO:0007155">
    <property type="term" value="P:cell adhesion"/>
    <property type="evidence" value="ECO:0000315"/>
    <property type="project" value="MGI"/>
</dbReference>
<dbReference type="GO" id="GO:0002042">
    <property type="term" value="P:cell migration involved in sprouting angiogenesis"/>
    <property type="evidence" value="ECO:0000314"/>
    <property type="project" value="UniProt"/>
</dbReference>
<dbReference type="GO" id="GO:0098609">
    <property type="term" value="P:cell-cell adhesion"/>
    <property type="evidence" value="ECO:0000315"/>
    <property type="project" value="MGI"/>
</dbReference>
<dbReference type="GO" id="GO:0060690">
    <property type="term" value="P:epithelial cell differentiation involved in salivary gland development"/>
    <property type="evidence" value="ECO:0000315"/>
    <property type="project" value="MGI"/>
</dbReference>
<dbReference type="GO" id="GO:0072102">
    <property type="term" value="P:glomerulus morphogenesis"/>
    <property type="evidence" value="ECO:0000315"/>
    <property type="project" value="MGI"/>
</dbReference>
<dbReference type="GO" id="GO:0001822">
    <property type="term" value="P:kidney development"/>
    <property type="evidence" value="ECO:0000315"/>
    <property type="project" value="MGI"/>
</dbReference>
<dbReference type="GO" id="GO:0001738">
    <property type="term" value="P:morphogenesis of a polarized epithelium"/>
    <property type="evidence" value="ECO:0000315"/>
    <property type="project" value="MGI"/>
</dbReference>
<dbReference type="GO" id="GO:0150107">
    <property type="term" value="P:positive regulation of protein localization to cell-cell junction"/>
    <property type="evidence" value="ECO:0000315"/>
    <property type="project" value="UniProtKB"/>
</dbReference>
<dbReference type="GO" id="GO:0010954">
    <property type="term" value="P:positive regulation of protein processing"/>
    <property type="evidence" value="ECO:0000315"/>
    <property type="project" value="MGI"/>
</dbReference>
<dbReference type="GO" id="GO:0007435">
    <property type="term" value="P:salivary gland morphogenesis"/>
    <property type="evidence" value="ECO:0000315"/>
    <property type="project" value="MGI"/>
</dbReference>
<dbReference type="GO" id="GO:0016055">
    <property type="term" value="P:Wnt signaling pathway"/>
    <property type="evidence" value="ECO:0007669"/>
    <property type="project" value="UniProtKB-KW"/>
</dbReference>
<dbReference type="FunFam" id="1.25.10.10:FF:000007">
    <property type="entry name" value="ARVCF, delta catenin family member"/>
    <property type="match status" value="1"/>
</dbReference>
<dbReference type="Gene3D" id="1.25.10.10">
    <property type="entry name" value="Leucine-rich Repeat Variant"/>
    <property type="match status" value="1"/>
</dbReference>
<dbReference type="InterPro" id="IPR011989">
    <property type="entry name" value="ARM-like"/>
</dbReference>
<dbReference type="InterPro" id="IPR016024">
    <property type="entry name" value="ARM-type_fold"/>
</dbReference>
<dbReference type="InterPro" id="IPR000225">
    <property type="entry name" value="Armadillo"/>
</dbReference>
<dbReference type="InterPro" id="IPR028435">
    <property type="entry name" value="Plakophilin/d_Catenin"/>
</dbReference>
<dbReference type="PANTHER" id="PTHR10372:SF6">
    <property type="entry name" value="CATENIN DELTA-1"/>
    <property type="match status" value="1"/>
</dbReference>
<dbReference type="PANTHER" id="PTHR10372">
    <property type="entry name" value="PLAKOPHILLIN-RELATED"/>
    <property type="match status" value="1"/>
</dbReference>
<dbReference type="Pfam" id="PF00514">
    <property type="entry name" value="Arm"/>
    <property type="match status" value="4"/>
</dbReference>
<dbReference type="SMART" id="SM00185">
    <property type="entry name" value="ARM"/>
    <property type="match status" value="7"/>
</dbReference>
<dbReference type="SUPFAM" id="SSF48371">
    <property type="entry name" value="ARM repeat"/>
    <property type="match status" value="1"/>
</dbReference>
<dbReference type="PROSITE" id="PS50176">
    <property type="entry name" value="ARM_REPEAT"/>
    <property type="match status" value="3"/>
</dbReference>
<feature type="chain" id="PRO_0000064297" description="Catenin delta-1">
    <location>
        <begin position="1"/>
        <end position="938"/>
    </location>
</feature>
<feature type="repeat" description="ARM 1">
    <location>
        <begin position="358"/>
        <end position="395"/>
    </location>
</feature>
<feature type="repeat" description="ARM 2">
    <location>
        <begin position="398"/>
        <end position="437"/>
    </location>
</feature>
<feature type="repeat" description="ARM 3">
    <location>
        <begin position="441"/>
        <end position="475"/>
    </location>
</feature>
<feature type="repeat" description="ARM 4">
    <location>
        <begin position="476"/>
        <end position="516"/>
    </location>
</feature>
<feature type="repeat" description="ARM 5">
    <location>
        <begin position="534"/>
        <end position="573"/>
    </location>
</feature>
<feature type="repeat" description="ARM 6">
    <location>
        <begin position="583"/>
        <end position="624"/>
    </location>
</feature>
<feature type="repeat" description="ARM 7">
    <location>
        <begin position="653"/>
        <end position="693"/>
    </location>
</feature>
<feature type="repeat" description="ARM 8">
    <location>
        <begin position="700"/>
        <end position="739"/>
    </location>
</feature>
<feature type="repeat" description="ARM 9">
    <location>
        <begin position="740"/>
        <end position="780"/>
    </location>
</feature>
<feature type="repeat" description="ARM 10">
    <location>
        <begin position="781"/>
        <end position="826"/>
    </location>
</feature>
<feature type="region of interest" description="Necessary and sufficient for interaction with CCDC85B" evidence="2">
    <location>
        <begin position="1"/>
        <end position="357"/>
    </location>
</feature>
<feature type="region of interest" description="Disordered" evidence="4">
    <location>
        <begin position="855"/>
        <end position="938"/>
    </location>
</feature>
<feature type="coiled-coil region" evidence="3">
    <location>
        <begin position="10"/>
        <end position="46"/>
    </location>
</feature>
<feature type="compositionally biased region" description="Basic and acidic residues" evidence="4">
    <location>
        <begin position="875"/>
        <end position="888"/>
    </location>
</feature>
<feature type="compositionally biased region" description="Polar residues" evidence="4">
    <location>
        <begin position="892"/>
        <end position="908"/>
    </location>
</feature>
<feature type="compositionally biased region" description="Basic and acidic residues" evidence="4">
    <location>
        <begin position="909"/>
        <end position="922"/>
    </location>
</feature>
<feature type="site" description="Essential for interaction with cadherins" evidence="2">
    <location>
        <position position="401"/>
    </location>
</feature>
<feature type="site" description="Essential for interaction with cadherins" evidence="2">
    <location>
        <position position="478"/>
    </location>
</feature>
<feature type="modified residue" description="N-acetylmethionine" evidence="2">
    <location>
        <position position="1"/>
    </location>
</feature>
<feature type="modified residue" description="Phosphoserine" evidence="2">
    <location>
        <position position="4"/>
    </location>
</feature>
<feature type="modified residue" description="Phosphoserine" evidence="25">
    <location>
        <position position="47"/>
    </location>
</feature>
<feature type="modified residue" description="Phosphothreonine" evidence="25">
    <location>
        <position position="59"/>
    </location>
</feature>
<feature type="modified residue" description="Phosphotyrosine; by FYN" evidence="2">
    <location>
        <position position="112"/>
    </location>
</feature>
<feature type="modified residue" description="Phosphoserine" evidence="2">
    <location>
        <position position="125"/>
    </location>
</feature>
<feature type="modified residue" description="Phosphotyrosine" evidence="20">
    <location>
        <position position="217"/>
    </location>
</feature>
<feature type="modified residue" description="Phosphotyrosine" evidence="20">
    <location>
        <position position="221"/>
    </location>
</feature>
<feature type="modified residue" description="Phosphoserine" evidence="25">
    <location>
        <position position="225"/>
    </location>
</feature>
<feature type="modified residue" description="Phosphotyrosine" evidence="24">
    <location>
        <position position="228"/>
    </location>
</feature>
<feature type="modified residue" description="Phosphoserine" evidence="21 25">
    <location>
        <position position="230"/>
    </location>
</feature>
<feature type="modified residue" description="Phosphoserine" evidence="21 25">
    <location>
        <position position="252"/>
    </location>
</feature>
<feature type="modified residue" description="Phosphotyrosine" evidence="24">
    <location>
        <position position="257"/>
    </location>
</feature>
<feature type="modified residue" description="Phosphoserine" evidence="2">
    <location>
        <position position="268"/>
    </location>
</feature>
<feature type="modified residue" description="Phosphoserine" evidence="25">
    <location>
        <position position="269"/>
    </location>
</feature>
<feature type="modified residue" description="Phosphotyrosine" evidence="20">
    <location>
        <position position="280"/>
    </location>
</feature>
<feature type="modified residue" description="Phosphoserine" evidence="21 25">
    <location>
        <position position="288"/>
    </location>
</feature>
<feature type="modified residue" description="Phosphotyrosine" evidence="25">
    <location>
        <position position="291"/>
    </location>
</feature>
<feature type="modified residue" description="Phosphoserine" evidence="25">
    <location>
        <position position="300"/>
    </location>
</feature>
<feature type="modified residue" description="Phosphothreonine" evidence="25">
    <location>
        <position position="304"/>
    </location>
</feature>
<feature type="modified residue" description="Phosphoserine" evidence="25">
    <location>
        <position position="320"/>
    </location>
</feature>
<feature type="modified residue" description="Phosphoserine" evidence="2">
    <location>
        <position position="346"/>
    </location>
</feature>
<feature type="modified residue" description="Phosphoserine" evidence="21 23 24 25">
    <location>
        <position position="349"/>
    </location>
</feature>
<feature type="modified residue" description="Phosphoserine" evidence="24 25">
    <location>
        <position position="352"/>
    </location>
</feature>
<feature type="modified residue" description="Phosphoserine" evidence="2">
    <location>
        <position position="617"/>
    </location>
</feature>
<feature type="modified residue" description="Phosphoserine" evidence="25">
    <location>
        <position position="713"/>
    </location>
</feature>
<feature type="modified residue" description="Phosphoserine" evidence="2">
    <location>
        <position position="811"/>
    </location>
</feature>
<feature type="modified residue" description="Phosphoserine" evidence="21 25">
    <location>
        <position position="847"/>
    </location>
</feature>
<feature type="modified residue" description="Phosphoserine" evidence="21 25">
    <location>
        <position position="857"/>
    </location>
</feature>
<feature type="modified residue" description="Phosphoserine" evidence="2">
    <location>
        <position position="859"/>
    </location>
</feature>
<feature type="modified residue" description="Phosphoserine" evidence="2">
    <location>
        <position position="861"/>
    </location>
</feature>
<feature type="modified residue" description="Phosphoserine" evidence="25">
    <location>
        <position position="864"/>
    </location>
</feature>
<feature type="modified residue" description="Phosphotyrosine" evidence="21 25">
    <location>
        <position position="865"/>
    </location>
</feature>
<feature type="modified residue" description="Phosphoserine" evidence="25">
    <location>
        <position position="868"/>
    </location>
</feature>
<feature type="modified residue" description="Phosphothreonine" evidence="25">
    <location>
        <position position="869"/>
    </location>
</feature>
<feature type="modified residue" description="Phosphoserine" evidence="2">
    <location>
        <position position="879"/>
    </location>
</feature>
<feature type="modified residue" description="Phosphoserine" evidence="21 25">
    <location>
        <position position="899"/>
    </location>
</feature>
<feature type="modified residue" description="Phosphotyrosine" evidence="22 24">
    <location>
        <position position="904"/>
    </location>
</feature>
<feature type="modified residue" description="Phosphothreonine" evidence="2">
    <location>
        <position position="906"/>
    </location>
</feature>
<feature type="modified residue" description="Phosphothreonine" evidence="2">
    <location>
        <position position="916"/>
    </location>
</feature>
<feature type="modified residue" description="Phosphoserine" evidence="25">
    <location>
        <position position="920"/>
    </location>
</feature>
<feature type="cross-link" description="Glycyl lysine isopeptide (Lys-Gly) (interchain with G-Cter in SUMO2)" evidence="2">
    <location>
        <position position="421"/>
    </location>
</feature>
<feature type="cross-link" description="Glycyl lysine isopeptide (Lys-Gly) (interchain with G-Cter in SUMO2)" evidence="2">
    <location>
        <position position="517"/>
    </location>
</feature>
<feature type="cross-link" description="Glycyl lysine isopeptide (Lys-Gly) (interchain with G-Cter in SUMO2)" evidence="2">
    <location>
        <position position="882"/>
    </location>
</feature>
<feature type="splice variant" id="VSP_030567" description="In isoform 2." evidence="17">
    <location>
        <begin position="626"/>
        <end position="631"/>
    </location>
</feature>
<feature type="splice variant" id="VSP_030568" description="In isoform 2 and isoform 3." evidence="16 17 18">
    <location>
        <begin position="880"/>
        <end position="900"/>
    </location>
</feature>
<feature type="mutagenesis site" description="Abolishes nuclear localization." evidence="7">
    <original>KK</original>
    <variation>AA</variation>
    <location>
        <begin position="622"/>
        <end position="623"/>
    </location>
</feature>
<feature type="sequence conflict" description="In Ref. 1; CAA79078." evidence="19" ref="1">
    <original>R</original>
    <variation>A</variation>
    <location>
        <position position="405"/>
    </location>
</feature>
<feature type="sequence conflict" description="In Ref. 1; CAA79078." evidence="19" ref="1">
    <original>K</original>
    <variation>N</variation>
    <location>
        <position position="676"/>
    </location>
</feature>
<feature type="sequence conflict" description="In Ref. 1; CAA79078." evidence="19" ref="1">
    <original>I</original>
    <variation>R</variation>
    <location>
        <position position="715"/>
    </location>
</feature>
<feature type="sequence conflict" description="In Ref. 1; CAA79078." evidence="19" ref="1">
    <original>I</original>
    <variation>R</variation>
    <location>
        <position position="752"/>
    </location>
</feature>
<feature type="short sequence motif" description="Nuclear localization signal (NLS)" evidence="7">
    <location sequence="P30999-2">
        <begin position="622"/>
        <end position="629"/>
    </location>
</feature>
<evidence type="ECO:0000250" key="1"/>
<evidence type="ECO:0000250" key="2">
    <source>
        <dbReference type="UniProtKB" id="O60716"/>
    </source>
</evidence>
<evidence type="ECO:0000255" key="3"/>
<evidence type="ECO:0000256" key="4">
    <source>
        <dbReference type="SAM" id="MobiDB-lite"/>
    </source>
</evidence>
<evidence type="ECO:0000269" key="5">
    <source>
    </source>
</evidence>
<evidence type="ECO:0000269" key="6">
    <source>
    </source>
</evidence>
<evidence type="ECO:0000269" key="7">
    <source>
    </source>
</evidence>
<evidence type="ECO:0000269" key="8">
    <source>
    </source>
</evidence>
<evidence type="ECO:0000269" key="9">
    <source>
    </source>
</evidence>
<evidence type="ECO:0000269" key="10">
    <source>
    </source>
</evidence>
<evidence type="ECO:0000269" key="11">
    <source>
    </source>
</evidence>
<evidence type="ECO:0000269" key="12">
    <source>
    </source>
</evidence>
<evidence type="ECO:0000269" key="13">
    <source>
    </source>
</evidence>
<evidence type="ECO:0000269" key="14">
    <source>
    </source>
</evidence>
<evidence type="ECO:0000269" key="15">
    <source>
    </source>
</evidence>
<evidence type="ECO:0000303" key="16">
    <source>
    </source>
</evidence>
<evidence type="ECO:0000303" key="17">
    <source>
    </source>
</evidence>
<evidence type="ECO:0000303" key="18">
    <source>
    </source>
</evidence>
<evidence type="ECO:0000305" key="19"/>
<evidence type="ECO:0007744" key="20">
    <source>
    </source>
</evidence>
<evidence type="ECO:0007744" key="21">
    <source>
    </source>
</evidence>
<evidence type="ECO:0007744" key="22">
    <source>
    </source>
</evidence>
<evidence type="ECO:0007744" key="23">
    <source>
    </source>
</evidence>
<evidence type="ECO:0007744" key="24">
    <source>
    </source>
</evidence>
<evidence type="ECO:0007744" key="25">
    <source>
    </source>
</evidence>